<keyword id="KW-0001">2Fe-2S</keyword>
<keyword id="KW-0028">Amino-acid biosynthesis</keyword>
<keyword id="KW-0100">Branched-chain amino acid biosynthesis</keyword>
<keyword id="KW-0408">Iron</keyword>
<keyword id="KW-0411">Iron-sulfur</keyword>
<keyword id="KW-0456">Lyase</keyword>
<keyword id="KW-0460">Magnesium</keyword>
<keyword id="KW-0479">Metal-binding</keyword>
<dbReference type="EC" id="4.2.1.9" evidence="1"/>
<dbReference type="EMBL" id="CP000472">
    <property type="protein sequence ID" value="ACJ27196.1"/>
    <property type="molecule type" value="Genomic_DNA"/>
</dbReference>
<dbReference type="RefSeq" id="WP_020910578.1">
    <property type="nucleotide sequence ID" value="NC_011566.1"/>
</dbReference>
<dbReference type="SMR" id="B8CHS0"/>
<dbReference type="STRING" id="225849.swp_0362"/>
<dbReference type="KEGG" id="swp:swp_0362"/>
<dbReference type="eggNOG" id="COG0129">
    <property type="taxonomic scope" value="Bacteria"/>
</dbReference>
<dbReference type="HOGENOM" id="CLU_014271_4_3_6"/>
<dbReference type="OrthoDB" id="9807077at2"/>
<dbReference type="UniPathway" id="UPA00047">
    <property type="reaction ID" value="UER00057"/>
</dbReference>
<dbReference type="UniPathway" id="UPA00049">
    <property type="reaction ID" value="UER00061"/>
</dbReference>
<dbReference type="Proteomes" id="UP000000753">
    <property type="component" value="Chromosome"/>
</dbReference>
<dbReference type="GO" id="GO:0005829">
    <property type="term" value="C:cytosol"/>
    <property type="evidence" value="ECO:0007669"/>
    <property type="project" value="TreeGrafter"/>
</dbReference>
<dbReference type="GO" id="GO:0051537">
    <property type="term" value="F:2 iron, 2 sulfur cluster binding"/>
    <property type="evidence" value="ECO:0007669"/>
    <property type="project" value="UniProtKB-UniRule"/>
</dbReference>
<dbReference type="GO" id="GO:0004160">
    <property type="term" value="F:dihydroxy-acid dehydratase activity"/>
    <property type="evidence" value="ECO:0007669"/>
    <property type="project" value="UniProtKB-UniRule"/>
</dbReference>
<dbReference type="GO" id="GO:0000287">
    <property type="term" value="F:magnesium ion binding"/>
    <property type="evidence" value="ECO:0007669"/>
    <property type="project" value="UniProtKB-UniRule"/>
</dbReference>
<dbReference type="GO" id="GO:0009097">
    <property type="term" value="P:isoleucine biosynthetic process"/>
    <property type="evidence" value="ECO:0007669"/>
    <property type="project" value="UniProtKB-UniRule"/>
</dbReference>
<dbReference type="GO" id="GO:0009099">
    <property type="term" value="P:L-valine biosynthetic process"/>
    <property type="evidence" value="ECO:0007669"/>
    <property type="project" value="UniProtKB-UniRule"/>
</dbReference>
<dbReference type="FunFam" id="3.50.30.80:FF:000001">
    <property type="entry name" value="Dihydroxy-acid dehydratase"/>
    <property type="match status" value="1"/>
</dbReference>
<dbReference type="Gene3D" id="3.50.30.80">
    <property type="entry name" value="IlvD/EDD C-terminal domain-like"/>
    <property type="match status" value="1"/>
</dbReference>
<dbReference type="HAMAP" id="MF_00012">
    <property type="entry name" value="IlvD"/>
    <property type="match status" value="1"/>
</dbReference>
<dbReference type="InterPro" id="IPR042096">
    <property type="entry name" value="Dihydro-acid_dehy_C"/>
</dbReference>
<dbReference type="InterPro" id="IPR004404">
    <property type="entry name" value="DihydroxyA_deHydtase"/>
</dbReference>
<dbReference type="InterPro" id="IPR020558">
    <property type="entry name" value="DiOHA_6PGluconate_deHydtase_CS"/>
</dbReference>
<dbReference type="InterPro" id="IPR056740">
    <property type="entry name" value="ILV_EDD_C"/>
</dbReference>
<dbReference type="InterPro" id="IPR000581">
    <property type="entry name" value="ILV_EDD_N"/>
</dbReference>
<dbReference type="InterPro" id="IPR037237">
    <property type="entry name" value="IlvD/EDD_N"/>
</dbReference>
<dbReference type="NCBIfam" id="TIGR00110">
    <property type="entry name" value="ilvD"/>
    <property type="match status" value="1"/>
</dbReference>
<dbReference type="NCBIfam" id="NF009103">
    <property type="entry name" value="PRK12448.1"/>
    <property type="match status" value="1"/>
</dbReference>
<dbReference type="PANTHER" id="PTHR43661">
    <property type="entry name" value="D-XYLONATE DEHYDRATASE"/>
    <property type="match status" value="1"/>
</dbReference>
<dbReference type="PANTHER" id="PTHR43661:SF3">
    <property type="entry name" value="D-XYLONATE DEHYDRATASE YAGF-RELATED"/>
    <property type="match status" value="1"/>
</dbReference>
<dbReference type="Pfam" id="PF24877">
    <property type="entry name" value="ILV_EDD_C"/>
    <property type="match status" value="1"/>
</dbReference>
<dbReference type="Pfam" id="PF00920">
    <property type="entry name" value="ILVD_EDD_N"/>
    <property type="match status" value="1"/>
</dbReference>
<dbReference type="SUPFAM" id="SSF143975">
    <property type="entry name" value="IlvD/EDD N-terminal domain-like"/>
    <property type="match status" value="1"/>
</dbReference>
<dbReference type="SUPFAM" id="SSF52016">
    <property type="entry name" value="LeuD/IlvD-like"/>
    <property type="match status" value="1"/>
</dbReference>
<dbReference type="PROSITE" id="PS00886">
    <property type="entry name" value="ILVD_EDD_1"/>
    <property type="match status" value="1"/>
</dbReference>
<dbReference type="PROSITE" id="PS00887">
    <property type="entry name" value="ILVD_EDD_2"/>
    <property type="match status" value="1"/>
</dbReference>
<feature type="chain" id="PRO_1000116278" description="Dihydroxy-acid dehydratase">
    <location>
        <begin position="1"/>
        <end position="615"/>
    </location>
</feature>
<feature type="active site" description="Proton acceptor" evidence="1">
    <location>
        <position position="517"/>
    </location>
</feature>
<feature type="binding site" evidence="1">
    <location>
        <position position="81"/>
    </location>
    <ligand>
        <name>Mg(2+)</name>
        <dbReference type="ChEBI" id="CHEBI:18420"/>
    </ligand>
</feature>
<feature type="binding site" evidence="1">
    <location>
        <position position="122"/>
    </location>
    <ligand>
        <name>[2Fe-2S] cluster</name>
        <dbReference type="ChEBI" id="CHEBI:190135"/>
    </ligand>
</feature>
<feature type="binding site" evidence="1">
    <location>
        <position position="123"/>
    </location>
    <ligand>
        <name>Mg(2+)</name>
        <dbReference type="ChEBI" id="CHEBI:18420"/>
    </ligand>
</feature>
<feature type="binding site" description="via carbamate group" evidence="1">
    <location>
        <position position="124"/>
    </location>
    <ligand>
        <name>Mg(2+)</name>
        <dbReference type="ChEBI" id="CHEBI:18420"/>
    </ligand>
</feature>
<feature type="binding site" evidence="1">
    <location>
        <position position="195"/>
    </location>
    <ligand>
        <name>[2Fe-2S] cluster</name>
        <dbReference type="ChEBI" id="CHEBI:190135"/>
    </ligand>
</feature>
<feature type="binding site" evidence="1">
    <location>
        <position position="491"/>
    </location>
    <ligand>
        <name>Mg(2+)</name>
        <dbReference type="ChEBI" id="CHEBI:18420"/>
    </ligand>
</feature>
<feature type="modified residue" description="N6-carboxylysine" evidence="1">
    <location>
        <position position="124"/>
    </location>
</feature>
<comment type="function">
    <text evidence="1">Functions in the biosynthesis of branched-chain amino acids. Catalyzes the dehydration of (2R,3R)-2,3-dihydroxy-3-methylpentanoate (2,3-dihydroxy-3-methylvalerate) into 2-oxo-3-methylpentanoate (2-oxo-3-methylvalerate) and of (2R)-2,3-dihydroxy-3-methylbutanoate (2,3-dihydroxyisovalerate) into 2-oxo-3-methylbutanoate (2-oxoisovalerate), the penultimate precursor to L-isoleucine and L-valine, respectively.</text>
</comment>
<comment type="catalytic activity">
    <reaction evidence="1">
        <text>(2R)-2,3-dihydroxy-3-methylbutanoate = 3-methyl-2-oxobutanoate + H2O</text>
        <dbReference type="Rhea" id="RHEA:24809"/>
        <dbReference type="ChEBI" id="CHEBI:11851"/>
        <dbReference type="ChEBI" id="CHEBI:15377"/>
        <dbReference type="ChEBI" id="CHEBI:49072"/>
        <dbReference type="EC" id="4.2.1.9"/>
    </reaction>
    <physiologicalReaction direction="left-to-right" evidence="1">
        <dbReference type="Rhea" id="RHEA:24810"/>
    </physiologicalReaction>
</comment>
<comment type="catalytic activity">
    <reaction evidence="1">
        <text>(2R,3R)-2,3-dihydroxy-3-methylpentanoate = (S)-3-methyl-2-oxopentanoate + H2O</text>
        <dbReference type="Rhea" id="RHEA:27694"/>
        <dbReference type="ChEBI" id="CHEBI:15377"/>
        <dbReference type="ChEBI" id="CHEBI:35146"/>
        <dbReference type="ChEBI" id="CHEBI:49258"/>
        <dbReference type="EC" id="4.2.1.9"/>
    </reaction>
    <physiologicalReaction direction="left-to-right" evidence="1">
        <dbReference type="Rhea" id="RHEA:27695"/>
    </physiologicalReaction>
</comment>
<comment type="cofactor">
    <cofactor evidence="1">
        <name>[2Fe-2S] cluster</name>
        <dbReference type="ChEBI" id="CHEBI:190135"/>
    </cofactor>
    <text evidence="1">Binds 1 [2Fe-2S] cluster per subunit. This cluster acts as a Lewis acid cofactor.</text>
</comment>
<comment type="cofactor">
    <cofactor evidence="1">
        <name>Mg(2+)</name>
        <dbReference type="ChEBI" id="CHEBI:18420"/>
    </cofactor>
</comment>
<comment type="pathway">
    <text evidence="1">Amino-acid biosynthesis; L-isoleucine biosynthesis; L-isoleucine from 2-oxobutanoate: step 3/4.</text>
</comment>
<comment type="pathway">
    <text evidence="1">Amino-acid biosynthesis; L-valine biosynthesis; L-valine from pyruvate: step 3/4.</text>
</comment>
<comment type="subunit">
    <text evidence="1">Homodimer.</text>
</comment>
<comment type="similarity">
    <text evidence="1">Belongs to the IlvD/Edd family.</text>
</comment>
<sequence>MPKLRSATSTEGRNMAGARALWRATGVKDNDFGKPIIAISNSFTQFVPGHVHLKDMGQLVAGAIEEAGGIAKEFNTIAVDDGIAMGHGGMLYSLPSRELIADSVEYMVNAHCADALVCISNCDKITPGMLMAALRLNIPVIFVSGGPMEAGKTKLSDKLIKLDLVDAMVAGADDRVSDADSEQIERSACPTCGSCSGMFTANSMNCLTEALGLSLPGNGSMLATHADRRELFLEAGRRIMDLTTRYYRDDDQSALPRNIANFNAFENAMTLDIAMGGSSNTVLHLLAAAIEAEVDFSMDDIDRLSRLVPHLCKVAPSTPKYHMEDVHRAGGVMGILGELDRAGLLHNDAYHVAGSNLAEVLAKYDIAQSKDEAVHKFFSAGPAGIPTTKAFSQDCRWDSVDIDREAGCIRTREFAFSQEGGLAVLSGNVALDGCIVKTAGVEVENHTFIGSARVYESQDDAVAGILGGEVVEGDVVVIRYEGPKGGPGMQEMLYPTSYLKSRGLGTKCALITDGRFSGGTSGLSIGHVSPEAAAGGTIALVNTGDRIEIDIPARSIKLAISDVELAARRTAMEALGKDAWKPVGRVRQVSMALKAYALLATSADKGAVRDTSKLG</sequence>
<name>ILVD_SHEPW</name>
<gene>
    <name evidence="1" type="primary">ilvD</name>
    <name type="ordered locus">swp_0362</name>
</gene>
<proteinExistence type="inferred from homology"/>
<accession>B8CHS0</accession>
<organism>
    <name type="scientific">Shewanella piezotolerans (strain WP3 / JCM 13877)</name>
    <dbReference type="NCBI Taxonomy" id="225849"/>
    <lineage>
        <taxon>Bacteria</taxon>
        <taxon>Pseudomonadati</taxon>
        <taxon>Pseudomonadota</taxon>
        <taxon>Gammaproteobacteria</taxon>
        <taxon>Alteromonadales</taxon>
        <taxon>Shewanellaceae</taxon>
        <taxon>Shewanella</taxon>
    </lineage>
</organism>
<reference key="1">
    <citation type="journal article" date="2008" name="PLoS ONE">
        <title>Environmental adaptation: genomic analysis of the piezotolerant and psychrotolerant deep-sea iron reducing bacterium Shewanella piezotolerans WP3.</title>
        <authorList>
            <person name="Wang F."/>
            <person name="Wang J."/>
            <person name="Jian H."/>
            <person name="Zhang B."/>
            <person name="Li S."/>
            <person name="Wang F."/>
            <person name="Zeng X."/>
            <person name="Gao L."/>
            <person name="Bartlett D.H."/>
            <person name="Yu J."/>
            <person name="Hu S."/>
            <person name="Xiao X."/>
        </authorList>
    </citation>
    <scope>NUCLEOTIDE SEQUENCE [LARGE SCALE GENOMIC DNA]</scope>
    <source>
        <strain>WP3 / JCM 13877</strain>
    </source>
</reference>
<protein>
    <recommendedName>
        <fullName evidence="1">Dihydroxy-acid dehydratase</fullName>
        <shortName evidence="1">DAD</shortName>
        <ecNumber evidence="1">4.2.1.9</ecNumber>
    </recommendedName>
</protein>
<evidence type="ECO:0000255" key="1">
    <source>
        <dbReference type="HAMAP-Rule" id="MF_00012"/>
    </source>
</evidence>